<evidence type="ECO:0000305" key="1"/>
<proteinExistence type="inferred from homology"/>
<comment type="similarity">
    <text evidence="1">Belongs to the carbamate kinase family.</text>
</comment>
<name>ARCM_ECOLI</name>
<organism>
    <name type="scientific">Escherichia coli (strain K12)</name>
    <dbReference type="NCBI Taxonomy" id="83333"/>
    <lineage>
        <taxon>Bacteria</taxon>
        <taxon>Pseudomonadati</taxon>
        <taxon>Pseudomonadota</taxon>
        <taxon>Gammaproteobacteria</taxon>
        <taxon>Enterobacterales</taxon>
        <taxon>Enterobacteriaceae</taxon>
        <taxon>Escherichia</taxon>
    </lineage>
</organism>
<accession>P77624</accession>
<accession>Q2MCA0</accession>
<feature type="chain" id="PRO_0000185147" description="Carbamate kinase-like protein YahI">
    <location>
        <begin position="1"/>
        <end position="316"/>
    </location>
</feature>
<protein>
    <recommendedName>
        <fullName>Carbamate kinase-like protein YahI</fullName>
    </recommendedName>
</protein>
<dbReference type="EMBL" id="U73857">
    <property type="protein sequence ID" value="AAB18049.1"/>
    <property type="molecule type" value="Genomic_DNA"/>
</dbReference>
<dbReference type="EMBL" id="U00096">
    <property type="protein sequence ID" value="AAC73426.1"/>
    <property type="molecule type" value="Genomic_DNA"/>
</dbReference>
<dbReference type="EMBL" id="AP009048">
    <property type="protein sequence ID" value="BAE76106.1"/>
    <property type="molecule type" value="Genomic_DNA"/>
</dbReference>
<dbReference type="PIR" id="C64759">
    <property type="entry name" value="C64759"/>
</dbReference>
<dbReference type="RefSeq" id="NP_414857.1">
    <property type="nucleotide sequence ID" value="NC_000913.3"/>
</dbReference>
<dbReference type="RefSeq" id="WP_000661672.1">
    <property type="nucleotide sequence ID" value="NZ_SSZK01000063.1"/>
</dbReference>
<dbReference type="SMR" id="P77624"/>
<dbReference type="BioGRID" id="4262166">
    <property type="interactions" value="23"/>
</dbReference>
<dbReference type="FunCoup" id="P77624">
    <property type="interactions" value="273"/>
</dbReference>
<dbReference type="IntAct" id="P77624">
    <property type="interactions" value="14"/>
</dbReference>
<dbReference type="STRING" id="511145.b0323"/>
<dbReference type="PaxDb" id="511145-b0323"/>
<dbReference type="EnsemblBacteria" id="AAC73426">
    <property type="protein sequence ID" value="AAC73426"/>
    <property type="gene ID" value="b0323"/>
</dbReference>
<dbReference type="GeneID" id="944984"/>
<dbReference type="KEGG" id="ecj:JW0315"/>
<dbReference type="KEGG" id="eco:b0323"/>
<dbReference type="KEGG" id="ecoc:C3026_01585"/>
<dbReference type="KEGG" id="ecoc:C3026_24755"/>
<dbReference type="PATRIC" id="fig|1411691.4.peg.1954"/>
<dbReference type="EchoBASE" id="EB3362"/>
<dbReference type="eggNOG" id="COG0549">
    <property type="taxonomic scope" value="Bacteria"/>
</dbReference>
<dbReference type="HOGENOM" id="CLU_076278_0_0_6"/>
<dbReference type="InParanoid" id="P77624"/>
<dbReference type="OMA" id="PDWHFVE"/>
<dbReference type="OrthoDB" id="9766717at2"/>
<dbReference type="PhylomeDB" id="P77624"/>
<dbReference type="BioCyc" id="EcoCyc:G6188-MONOMER"/>
<dbReference type="PRO" id="PR:P77624"/>
<dbReference type="Proteomes" id="UP000000625">
    <property type="component" value="Chromosome"/>
</dbReference>
<dbReference type="GO" id="GO:0005829">
    <property type="term" value="C:cytosol"/>
    <property type="evidence" value="ECO:0000314"/>
    <property type="project" value="EcoCyc"/>
</dbReference>
<dbReference type="GO" id="GO:0008804">
    <property type="term" value="F:carbamate kinase activity"/>
    <property type="evidence" value="ECO:0000318"/>
    <property type="project" value="GO_Central"/>
</dbReference>
<dbReference type="GO" id="GO:0019546">
    <property type="term" value="P:arginine deiminase pathway"/>
    <property type="evidence" value="ECO:0000318"/>
    <property type="project" value="GO_Central"/>
</dbReference>
<dbReference type="CDD" id="cd04235">
    <property type="entry name" value="AAK_CK"/>
    <property type="match status" value="1"/>
</dbReference>
<dbReference type="FunFam" id="3.40.1160.10:FF:000007">
    <property type="entry name" value="Carbamate kinase"/>
    <property type="match status" value="1"/>
</dbReference>
<dbReference type="Gene3D" id="3.40.1160.10">
    <property type="entry name" value="Acetylglutamate kinase-like"/>
    <property type="match status" value="1"/>
</dbReference>
<dbReference type="InterPro" id="IPR036393">
    <property type="entry name" value="AceGlu_kinase-like_sf"/>
</dbReference>
<dbReference type="InterPro" id="IPR001048">
    <property type="entry name" value="Asp/Glu/Uridylate_kinase"/>
</dbReference>
<dbReference type="InterPro" id="IPR003964">
    <property type="entry name" value="Carb_kinase"/>
</dbReference>
<dbReference type="NCBIfam" id="NF009007">
    <property type="entry name" value="PRK12352.1"/>
    <property type="match status" value="1"/>
</dbReference>
<dbReference type="PANTHER" id="PTHR30409">
    <property type="entry name" value="CARBAMATE KINASE"/>
    <property type="match status" value="1"/>
</dbReference>
<dbReference type="PANTHER" id="PTHR30409:SF1">
    <property type="entry name" value="CARBAMATE KINASE-RELATED"/>
    <property type="match status" value="1"/>
</dbReference>
<dbReference type="Pfam" id="PF00696">
    <property type="entry name" value="AA_kinase"/>
    <property type="match status" value="1"/>
</dbReference>
<dbReference type="PIRSF" id="PIRSF000723">
    <property type="entry name" value="Carbamate_kin"/>
    <property type="match status" value="1"/>
</dbReference>
<dbReference type="PRINTS" id="PR01469">
    <property type="entry name" value="CARBMTKINASE"/>
</dbReference>
<dbReference type="SUPFAM" id="SSF53633">
    <property type="entry name" value="Carbamate kinase-like"/>
    <property type="match status" value="1"/>
</dbReference>
<gene>
    <name type="primary">yahI</name>
    <name type="ordered locus">b0323</name>
    <name type="ordered locus">JW0315</name>
</gene>
<keyword id="KW-0418">Kinase</keyword>
<keyword id="KW-1185">Reference proteome</keyword>
<keyword id="KW-0808">Transferase</keyword>
<sequence>MKELVVVAIGGNSIIKDNASQSIEHQAEAVKAVADTVLEMLASDYDIVLTHGNGPQVGLDLRRAEIAHKREGLPLTPLANCVADTQGGIGYLIQQALNNRLARHGEKKAVTVVTQVEVDKNDPGFAHPTKPIGAFFSDSQRDELQKANPDWCFVEDAGRGYRRVVASPEPKRIVEAPAIKALIQQGFVVIGAGGGGIPVVRTDAGDYQSVDAVIDKDLSTALLAREIHADILVITTGVEKVCIHFGKPQQQALDRVDIATMTRYMQEGHFPPGSMLPKIIASLTFLEQGGKEVIITTPECLPAALRGETGTHIIKT</sequence>
<reference key="1">
    <citation type="submission" date="1997-01" db="EMBL/GenBank/DDBJ databases">
        <title>Sequence of minutes 4-25 of Escherichia coli.</title>
        <authorList>
            <person name="Chung E."/>
            <person name="Allen E."/>
            <person name="Araujo R."/>
            <person name="Aparicio A.M."/>
            <person name="Davis K."/>
            <person name="Duncan M."/>
            <person name="Federspiel N."/>
            <person name="Hyman R."/>
            <person name="Kalman S."/>
            <person name="Komp C."/>
            <person name="Kurdi O."/>
            <person name="Lew H."/>
            <person name="Lin D."/>
            <person name="Namath A."/>
            <person name="Oefner P."/>
            <person name="Roberts D."/>
            <person name="Schramm S."/>
            <person name="Davis R.W."/>
        </authorList>
    </citation>
    <scope>NUCLEOTIDE SEQUENCE [LARGE SCALE GENOMIC DNA]</scope>
    <source>
        <strain>K12 / MG1655 / ATCC 47076</strain>
    </source>
</reference>
<reference key="2">
    <citation type="journal article" date="1997" name="Science">
        <title>The complete genome sequence of Escherichia coli K-12.</title>
        <authorList>
            <person name="Blattner F.R."/>
            <person name="Plunkett G. III"/>
            <person name="Bloch C.A."/>
            <person name="Perna N.T."/>
            <person name="Burland V."/>
            <person name="Riley M."/>
            <person name="Collado-Vides J."/>
            <person name="Glasner J.D."/>
            <person name="Rode C.K."/>
            <person name="Mayhew G.F."/>
            <person name="Gregor J."/>
            <person name="Davis N.W."/>
            <person name="Kirkpatrick H.A."/>
            <person name="Goeden M.A."/>
            <person name="Rose D.J."/>
            <person name="Mau B."/>
            <person name="Shao Y."/>
        </authorList>
    </citation>
    <scope>NUCLEOTIDE SEQUENCE [LARGE SCALE GENOMIC DNA]</scope>
    <source>
        <strain>K12 / MG1655 / ATCC 47076</strain>
    </source>
</reference>
<reference key="3">
    <citation type="journal article" date="2006" name="Mol. Syst. Biol.">
        <title>Highly accurate genome sequences of Escherichia coli K-12 strains MG1655 and W3110.</title>
        <authorList>
            <person name="Hayashi K."/>
            <person name="Morooka N."/>
            <person name="Yamamoto Y."/>
            <person name="Fujita K."/>
            <person name="Isono K."/>
            <person name="Choi S."/>
            <person name="Ohtsubo E."/>
            <person name="Baba T."/>
            <person name="Wanner B.L."/>
            <person name="Mori H."/>
            <person name="Horiuchi T."/>
        </authorList>
    </citation>
    <scope>NUCLEOTIDE SEQUENCE [LARGE SCALE GENOMIC DNA]</scope>
    <source>
        <strain>K12 / W3110 / ATCC 27325 / DSM 5911</strain>
    </source>
</reference>